<feature type="chain" id="PRO_0000236203" description="Sorting nexin-15">
    <location>
        <begin position="1"/>
        <end position="338"/>
    </location>
</feature>
<feature type="domain" description="PX" evidence="4">
    <location>
        <begin position="1"/>
        <end position="131"/>
    </location>
</feature>
<feature type="domain" description="MIT">
    <location>
        <begin position="266"/>
        <end position="338"/>
    </location>
</feature>
<feature type="region of interest" description="Disordered" evidence="5">
    <location>
        <begin position="134"/>
        <end position="155"/>
    </location>
</feature>
<feature type="region of interest" description="Disordered" evidence="5">
    <location>
        <begin position="240"/>
        <end position="270"/>
    </location>
</feature>
<feature type="compositionally biased region" description="Pro residues" evidence="5">
    <location>
        <begin position="142"/>
        <end position="151"/>
    </location>
</feature>
<feature type="binding site" evidence="1">
    <location>
        <position position="52"/>
    </location>
    <ligand>
        <name>a 1,2-diacyl-sn-glycero-3-phospho-(1D-myo-inositol-3-phosphate)</name>
        <dbReference type="ChEBI" id="CHEBI:58088"/>
    </ligand>
</feature>
<feature type="binding site" evidence="1">
    <location>
        <position position="54"/>
    </location>
    <ligand>
        <name>a 1,2-diacyl-sn-glycero-3-phospho-(1D-myo-inositol-3-phosphate)</name>
        <dbReference type="ChEBI" id="CHEBI:58088"/>
    </ligand>
</feature>
<feature type="binding site" evidence="1">
    <location>
        <position position="88"/>
    </location>
    <ligand>
        <name>a 1,2-diacyl-sn-glycero-3-phospho-(1D-myo-inositol-3-phosphate)</name>
        <dbReference type="ChEBI" id="CHEBI:58088"/>
    </ligand>
</feature>
<feature type="binding site" evidence="1">
    <location>
        <position position="97"/>
    </location>
    <ligand>
        <name>a 1,2-diacyl-sn-glycero-3-phospho-(1D-myo-inositol-3-phosphate)</name>
        <dbReference type="ChEBI" id="CHEBI:58088"/>
    </ligand>
</feature>
<feature type="modified residue" description="Omega-N-methylarginine" evidence="2">
    <location>
        <position position="106"/>
    </location>
</feature>
<feature type="modified residue" description="Phosphoserine" evidence="3">
    <location>
        <position position="202"/>
    </location>
</feature>
<feature type="modified residue" description="Phosphoserine" evidence="3">
    <location>
        <position position="228"/>
    </location>
</feature>
<keyword id="KW-0963">Cytoplasm</keyword>
<keyword id="KW-0968">Cytoplasmic vesicle</keyword>
<keyword id="KW-0446">Lipid-binding</keyword>
<keyword id="KW-0472">Membrane</keyword>
<keyword id="KW-0488">Methylation</keyword>
<keyword id="KW-0597">Phosphoprotein</keyword>
<keyword id="KW-0653">Protein transport</keyword>
<keyword id="KW-1185">Reference proteome</keyword>
<keyword id="KW-0813">Transport</keyword>
<comment type="function">
    <text evidence="1">May be involved in several stages of intracellular trafficking. Overexpression of SNX15 disrupts the normal trafficking of proteins from the plasma membrane to recycling endosomes or the TGN (By similarity).</text>
</comment>
<comment type="subunit">
    <text evidence="1">Homodimer. Interacts with SNX1, SNX2 and SNX4 (By similarity).</text>
</comment>
<comment type="subcellular location">
    <subcellularLocation>
        <location evidence="1">Cytoplasm</location>
    </subcellularLocation>
    <subcellularLocation>
        <location evidence="1">Membrane</location>
        <topology evidence="1">Peripheral membrane protein</topology>
        <orientation evidence="1">Cytoplasmic side</orientation>
    </subcellularLocation>
    <subcellularLocation>
        <location evidence="1">Cytoplasmic vesicle membrane</location>
        <topology evidence="1">Peripheral membrane protein</topology>
        <orientation evidence="1">Cytoplasmic side</orientation>
    </subcellularLocation>
</comment>
<comment type="domain">
    <text evidence="1">The PX domain mediates interaction with membranes enriched in phosphatidylinositol 3-phosphate.</text>
</comment>
<comment type="similarity">
    <text evidence="6">Belongs to the sorting nexin family.</text>
</comment>
<reference key="1">
    <citation type="journal article" date="2004" name="Genome Res.">
        <title>The status, quality, and expansion of the NIH full-length cDNA project: the Mammalian Gene Collection (MGC).</title>
        <authorList>
            <consortium name="The MGC Project Team"/>
        </authorList>
    </citation>
    <scope>NUCLEOTIDE SEQUENCE [LARGE SCALE MRNA]</scope>
    <source>
        <tissue>Placenta</tissue>
    </source>
</reference>
<name>SNX15_RAT</name>
<accession>Q4V896</accession>
<gene>
    <name type="primary">Snx15</name>
</gene>
<proteinExistence type="evidence at transcript level"/>
<evidence type="ECO:0000250" key="1"/>
<evidence type="ECO:0000250" key="2">
    <source>
        <dbReference type="UniProtKB" id="Q91WE1"/>
    </source>
</evidence>
<evidence type="ECO:0000250" key="3">
    <source>
        <dbReference type="UniProtKB" id="Q9NRS6"/>
    </source>
</evidence>
<evidence type="ECO:0000255" key="4">
    <source>
        <dbReference type="PROSITE-ProRule" id="PRU00147"/>
    </source>
</evidence>
<evidence type="ECO:0000256" key="5">
    <source>
        <dbReference type="SAM" id="MobiDB-lite"/>
    </source>
</evidence>
<evidence type="ECO:0000305" key="6"/>
<protein>
    <recommendedName>
        <fullName>Sorting nexin-15</fullName>
    </recommendedName>
</protein>
<sequence>MSRRAKKDDFLRHYTVSDPRTHPKGYTEYKVTAQFISKKDPEDIKEVVVWKRYSDFRKLHGDLAYTHRNLFRRLEEFPAFPRAQVFGRFEASVIEERRKGAEDLLRFTVPIPALNNSPQLKEFFRGGEVTRPSEVSRDLQILPPPLIPTPPSDEARLLQPLPAERRGQEELEVPVDPLPSSPAQEALDLLFCCDSTEEASSSPARGPLSEAELALFDPYSKEESTGPSPTHTSELAAMEVQSKRLDQEPWEPGGREEEEAEDGDPAPAYLGQATELITQALRNEKAGAYAAALQGYQEGVHILLQGVSGDPSPTRREGVKKKAAEYLKRAETLHAHLP</sequence>
<dbReference type="EMBL" id="BC097481">
    <property type="protein sequence ID" value="AAH97481.1"/>
    <property type="molecule type" value="mRNA"/>
</dbReference>
<dbReference type="RefSeq" id="NP_001019923.1">
    <property type="nucleotide sequence ID" value="NM_001024752.1"/>
</dbReference>
<dbReference type="SMR" id="Q4V896"/>
<dbReference type="FunCoup" id="Q4V896">
    <property type="interactions" value="518"/>
</dbReference>
<dbReference type="STRING" id="10116.ENSRNOP00000028511"/>
<dbReference type="PhosphoSitePlus" id="Q4V896"/>
<dbReference type="jPOST" id="Q4V896"/>
<dbReference type="PaxDb" id="10116-ENSRNOP00000028511"/>
<dbReference type="GeneID" id="293691"/>
<dbReference type="KEGG" id="rno:293691"/>
<dbReference type="UCSC" id="RGD:1305803">
    <property type="organism name" value="rat"/>
</dbReference>
<dbReference type="AGR" id="RGD:1305803"/>
<dbReference type="CTD" id="29907"/>
<dbReference type="RGD" id="1305803">
    <property type="gene designation" value="Snx15"/>
</dbReference>
<dbReference type="VEuPathDB" id="HostDB:ENSRNOG00000021007"/>
<dbReference type="eggNOG" id="KOG0603">
    <property type="taxonomic scope" value="Eukaryota"/>
</dbReference>
<dbReference type="eggNOG" id="KOG2101">
    <property type="taxonomic scope" value="Eukaryota"/>
</dbReference>
<dbReference type="HOGENOM" id="CLU_055745_0_0_1"/>
<dbReference type="InParanoid" id="Q4V896"/>
<dbReference type="OrthoDB" id="64490at9989"/>
<dbReference type="PhylomeDB" id="Q4V896"/>
<dbReference type="TreeFam" id="TF323964"/>
<dbReference type="PRO" id="PR:Q4V896"/>
<dbReference type="Proteomes" id="UP000002494">
    <property type="component" value="Chromosome 1"/>
</dbReference>
<dbReference type="Bgee" id="ENSRNOG00000021007">
    <property type="expression patterns" value="Expressed in jejunum and 20 other cell types or tissues"/>
</dbReference>
<dbReference type="GO" id="GO:0030659">
    <property type="term" value="C:cytoplasmic vesicle membrane"/>
    <property type="evidence" value="ECO:0007669"/>
    <property type="project" value="UniProtKB-SubCell"/>
</dbReference>
<dbReference type="GO" id="GO:0035091">
    <property type="term" value="F:phosphatidylinositol binding"/>
    <property type="evidence" value="ECO:0007669"/>
    <property type="project" value="InterPro"/>
</dbReference>
<dbReference type="GO" id="GO:0015031">
    <property type="term" value="P:protein transport"/>
    <property type="evidence" value="ECO:0007669"/>
    <property type="project" value="UniProtKB-KW"/>
</dbReference>
<dbReference type="CDD" id="cd02677">
    <property type="entry name" value="MIT_SNX15"/>
    <property type="match status" value="1"/>
</dbReference>
<dbReference type="FunFam" id="3.30.1520.10:FF:000029">
    <property type="entry name" value="sorting nexin-15 isoform X1"/>
    <property type="match status" value="1"/>
</dbReference>
<dbReference type="Gene3D" id="1.20.58.80">
    <property type="entry name" value="Phosphotransferase system, lactose/cellobiose-type IIA subunit"/>
    <property type="match status" value="1"/>
</dbReference>
<dbReference type="Gene3D" id="3.30.1520.10">
    <property type="entry name" value="Phox-like domain"/>
    <property type="match status" value="1"/>
</dbReference>
<dbReference type="InterPro" id="IPR051866">
    <property type="entry name" value="Intracell_Sig-Traffick_Protein"/>
</dbReference>
<dbReference type="InterPro" id="IPR007330">
    <property type="entry name" value="MIT_dom"/>
</dbReference>
<dbReference type="InterPro" id="IPR036181">
    <property type="entry name" value="MIT_dom_sf"/>
</dbReference>
<dbReference type="InterPro" id="IPR001683">
    <property type="entry name" value="PX_dom"/>
</dbReference>
<dbReference type="InterPro" id="IPR036871">
    <property type="entry name" value="PX_dom_sf"/>
</dbReference>
<dbReference type="PANTHER" id="PTHR15508">
    <property type="entry name" value="RIBOSOMAL PROTEIN S6 KINASE"/>
    <property type="match status" value="1"/>
</dbReference>
<dbReference type="PANTHER" id="PTHR15508:SF9">
    <property type="entry name" value="SORTING NEXIN-15"/>
    <property type="match status" value="1"/>
</dbReference>
<dbReference type="Pfam" id="PF04212">
    <property type="entry name" value="MIT"/>
    <property type="match status" value="1"/>
</dbReference>
<dbReference type="Pfam" id="PF00787">
    <property type="entry name" value="PX"/>
    <property type="match status" value="1"/>
</dbReference>
<dbReference type="SMART" id="SM00745">
    <property type="entry name" value="MIT"/>
    <property type="match status" value="1"/>
</dbReference>
<dbReference type="SMART" id="SM00312">
    <property type="entry name" value="PX"/>
    <property type="match status" value="1"/>
</dbReference>
<dbReference type="SUPFAM" id="SSF116846">
    <property type="entry name" value="MIT domain"/>
    <property type="match status" value="1"/>
</dbReference>
<dbReference type="SUPFAM" id="SSF64268">
    <property type="entry name" value="PX domain"/>
    <property type="match status" value="1"/>
</dbReference>
<dbReference type="PROSITE" id="PS50195">
    <property type="entry name" value="PX"/>
    <property type="match status" value="1"/>
</dbReference>
<organism>
    <name type="scientific">Rattus norvegicus</name>
    <name type="common">Rat</name>
    <dbReference type="NCBI Taxonomy" id="10116"/>
    <lineage>
        <taxon>Eukaryota</taxon>
        <taxon>Metazoa</taxon>
        <taxon>Chordata</taxon>
        <taxon>Craniata</taxon>
        <taxon>Vertebrata</taxon>
        <taxon>Euteleostomi</taxon>
        <taxon>Mammalia</taxon>
        <taxon>Eutheria</taxon>
        <taxon>Euarchontoglires</taxon>
        <taxon>Glires</taxon>
        <taxon>Rodentia</taxon>
        <taxon>Myomorpha</taxon>
        <taxon>Muroidea</taxon>
        <taxon>Muridae</taxon>
        <taxon>Murinae</taxon>
        <taxon>Rattus</taxon>
    </lineage>
</organism>